<keyword id="KW-1003">Cell membrane</keyword>
<keyword id="KW-0153">Cholesterol metabolism</keyword>
<keyword id="KW-0168">Coated pit</keyword>
<keyword id="KW-0903">Direct protein sequencing</keyword>
<keyword id="KW-1015">Disulfide bond</keyword>
<keyword id="KW-0245">EGF-like domain</keyword>
<keyword id="KW-0254">Endocytosis</keyword>
<keyword id="KW-0967">Endosome</keyword>
<keyword id="KW-0325">Glycoprotein</keyword>
<keyword id="KW-0333">Golgi apparatus</keyword>
<keyword id="KW-0427">LDL</keyword>
<keyword id="KW-0443">Lipid metabolism</keyword>
<keyword id="KW-0445">Lipid transport</keyword>
<keyword id="KW-0458">Lysosome</keyword>
<keyword id="KW-0472">Membrane</keyword>
<keyword id="KW-0675">Receptor</keyword>
<keyword id="KW-1185">Reference proteome</keyword>
<keyword id="KW-0677">Repeat</keyword>
<keyword id="KW-0732">Signal</keyword>
<keyword id="KW-0753">Steroid metabolism</keyword>
<keyword id="KW-1207">Sterol metabolism</keyword>
<keyword id="KW-0812">Transmembrane</keyword>
<keyword id="KW-1133">Transmembrane helix</keyword>
<keyword id="KW-0813">Transport</keyword>
<keyword id="KW-0832">Ubl conjugation</keyword>
<protein>
    <recommendedName>
        <fullName>Low-density lipoprotein receptor</fullName>
        <shortName>LDL receptor</shortName>
    </recommendedName>
</protein>
<name>LDLR_BOVIN</name>
<accession>P01131</accession>
<accession>F1MZ58</accession>
<proteinExistence type="evidence at protein level"/>
<gene>
    <name type="primary">LDLR</name>
</gene>
<reference key="1">
    <citation type="journal article" date="2009" name="Genome Biol.">
        <title>A whole-genome assembly of the domestic cow, Bos taurus.</title>
        <authorList>
            <person name="Zimin A.V."/>
            <person name="Delcher A.L."/>
            <person name="Florea L."/>
            <person name="Kelley D.R."/>
            <person name="Schatz M.C."/>
            <person name="Puiu D."/>
            <person name="Hanrahan F."/>
            <person name="Pertea G."/>
            <person name="Van Tassell C.P."/>
            <person name="Sonstegard T.S."/>
            <person name="Marcais G."/>
            <person name="Roberts M."/>
            <person name="Subramanian P."/>
            <person name="Yorke J.A."/>
            <person name="Salzberg S.L."/>
        </authorList>
    </citation>
    <scope>NUCLEOTIDE SEQUENCE [LARGE SCALE GENOMIC DNA]</scope>
    <source>
        <strain>Hereford</strain>
    </source>
</reference>
<reference key="2">
    <citation type="journal article" date="1983" name="J. Cell Biol.">
        <title>Use of antipeptide antibodies to demonstrate external orientation of the NH2-terminus of the low density lipoprotein receptor in the plasma membrane of fibroblasts.</title>
        <authorList>
            <person name="Schneider W.J."/>
            <person name="Slaughter C.J."/>
            <person name="Goldstein J.L."/>
            <person name="Anderson R.G."/>
            <person name="Capra J.D."/>
            <person name="Brown M.S."/>
        </authorList>
    </citation>
    <scope>PROTEIN SEQUENCE OF 22-37</scope>
    <scope>SUBCELLULAR LOCATION</scope>
    <scope>TOPOLOGY</scope>
</reference>
<reference key="3">
    <citation type="journal article" date="1984" name="Cell">
        <title>Domain map of the LDL receptor: sequence homology with the epidermal growth factor precursor.</title>
        <authorList>
            <person name="Russell D.W."/>
            <person name="Schneider W.J."/>
            <person name="Yamamoto T."/>
            <person name="Luskey K.L."/>
            <person name="Brown M.S."/>
            <person name="Goldstein J.L."/>
        </authorList>
    </citation>
    <scope>NUCLEOTIDE SEQUENCE [MRNA] OF 582-845</scope>
</reference>
<reference key="4">
    <citation type="journal article" date="1983" name="Proc. Natl. Acad. Sci. U.S.A.">
        <title>cDNA cloning of the bovine low density lipoprotein receptor: feedback regulation of a receptor mRNA.</title>
        <authorList>
            <person name="Russell D.W."/>
            <person name="Yamamoto T."/>
            <person name="Schneider W.J."/>
            <person name="Slaughter C.J."/>
            <person name="Brown M.S."/>
            <person name="Goldstein J.L."/>
        </authorList>
    </citation>
    <scope>NUCLEOTIDE SEQUENCE [MRNA] OF 644-679</scope>
</reference>
<reference key="5">
    <citation type="journal article" date="1986" name="Methods Enzymol.">
        <title>Molecular cloning of bovine LDL receptor cDNAs.</title>
        <authorList>
            <person name="Russell D.W."/>
            <person name="Yamamoto T."/>
        </authorList>
    </citation>
    <scope>NUCLEOTIDE SEQUENCE [MRNA] OF 644-679</scope>
</reference>
<organism>
    <name type="scientific">Bos taurus</name>
    <name type="common">Bovine</name>
    <dbReference type="NCBI Taxonomy" id="9913"/>
    <lineage>
        <taxon>Eukaryota</taxon>
        <taxon>Metazoa</taxon>
        <taxon>Chordata</taxon>
        <taxon>Craniata</taxon>
        <taxon>Vertebrata</taxon>
        <taxon>Euteleostomi</taxon>
        <taxon>Mammalia</taxon>
        <taxon>Eutheria</taxon>
        <taxon>Laurasiatheria</taxon>
        <taxon>Artiodactyla</taxon>
        <taxon>Ruminantia</taxon>
        <taxon>Pecora</taxon>
        <taxon>Bovidae</taxon>
        <taxon>Bovinae</taxon>
        <taxon>Bos</taxon>
    </lineage>
</organism>
<dbReference type="EMBL" id="DAAA02019482">
    <property type="status" value="NOT_ANNOTATED_CDS"/>
    <property type="molecule type" value="Genomic_DNA"/>
</dbReference>
<dbReference type="EMBL" id="K01830">
    <property type="protein sequence ID" value="AAA30618.1"/>
    <property type="molecule type" value="mRNA"/>
</dbReference>
<dbReference type="EMBL" id="K01429">
    <property type="protein sequence ID" value="AAA30620.1"/>
    <property type="molecule type" value="mRNA"/>
</dbReference>
<dbReference type="EMBL" id="M29843">
    <property type="protein sequence ID" value="AAA30619.1"/>
    <property type="molecule type" value="mRNA"/>
</dbReference>
<dbReference type="PIR" id="A01384">
    <property type="entry name" value="QRBOLD"/>
</dbReference>
<dbReference type="RefSeq" id="NP_001160002.1">
    <property type="nucleotide sequence ID" value="NM_001166530.1"/>
</dbReference>
<dbReference type="SMR" id="P01131"/>
<dbReference type="FunCoup" id="P01131">
    <property type="interactions" value="1156"/>
</dbReference>
<dbReference type="STRING" id="9913.ENSBTAP00000016342"/>
<dbReference type="GlyCosmos" id="P01131">
    <property type="glycosylation" value="1 site, No reported glycans"/>
</dbReference>
<dbReference type="GlyGen" id="P01131">
    <property type="glycosylation" value="1 site"/>
</dbReference>
<dbReference type="PaxDb" id="9913-ENSBTAP00000016342"/>
<dbReference type="Ensembl" id="ENSBTAT00000016342.6">
    <property type="protein sequence ID" value="ENSBTAP00000016342.4"/>
    <property type="gene ID" value="ENSBTAG00000012314.7"/>
</dbReference>
<dbReference type="GeneID" id="281276"/>
<dbReference type="KEGG" id="bta:281276"/>
<dbReference type="CTD" id="3949"/>
<dbReference type="VEuPathDB" id="HostDB:ENSBTAG00000012314"/>
<dbReference type="VGNC" id="VGNC:55214">
    <property type="gene designation" value="LDLR"/>
</dbReference>
<dbReference type="eggNOG" id="KOG1215">
    <property type="taxonomic scope" value="Eukaryota"/>
</dbReference>
<dbReference type="GeneTree" id="ENSGT00940000161046"/>
<dbReference type="InParanoid" id="P01131"/>
<dbReference type="OMA" id="KWICDGK"/>
<dbReference type="OrthoDB" id="664115at2759"/>
<dbReference type="TreeFam" id="TF351700"/>
<dbReference type="Reactome" id="R-BTA-8856825">
    <property type="pathway name" value="Cargo recognition for clathrin-mediated endocytosis"/>
</dbReference>
<dbReference type="Reactome" id="R-BTA-8856828">
    <property type="pathway name" value="Clathrin-mediated endocytosis"/>
</dbReference>
<dbReference type="Reactome" id="R-BTA-8964026">
    <property type="pathway name" value="Chylomicron clearance"/>
</dbReference>
<dbReference type="Reactome" id="R-BTA-8964038">
    <property type="pathway name" value="LDL clearance"/>
</dbReference>
<dbReference type="Proteomes" id="UP000009136">
    <property type="component" value="Chromosome 7"/>
</dbReference>
<dbReference type="Bgee" id="ENSBTAG00000012314">
    <property type="expression patterns" value="Expressed in diaphragm and 104 other cell types or tissues"/>
</dbReference>
<dbReference type="GO" id="GO:0045177">
    <property type="term" value="C:apical part of cell"/>
    <property type="evidence" value="ECO:0007669"/>
    <property type="project" value="Ensembl"/>
</dbReference>
<dbReference type="GO" id="GO:0016323">
    <property type="term" value="C:basolateral plasma membrane"/>
    <property type="evidence" value="ECO:0007669"/>
    <property type="project" value="Ensembl"/>
</dbReference>
<dbReference type="GO" id="GO:0005901">
    <property type="term" value="C:caveola"/>
    <property type="evidence" value="ECO:0000314"/>
    <property type="project" value="AgBase"/>
</dbReference>
<dbReference type="GO" id="GO:0009986">
    <property type="term" value="C:cell surface"/>
    <property type="evidence" value="ECO:0000314"/>
    <property type="project" value="UniProtKB"/>
</dbReference>
<dbReference type="GO" id="GO:0005905">
    <property type="term" value="C:clathrin-coated pit"/>
    <property type="evidence" value="ECO:0007669"/>
    <property type="project" value="UniProtKB-SubCell"/>
</dbReference>
<dbReference type="GO" id="GO:0005769">
    <property type="term" value="C:early endosome"/>
    <property type="evidence" value="ECO:0000250"/>
    <property type="project" value="UniProtKB"/>
</dbReference>
<dbReference type="GO" id="GO:0009897">
    <property type="term" value="C:external side of plasma membrane"/>
    <property type="evidence" value="ECO:0007669"/>
    <property type="project" value="Ensembl"/>
</dbReference>
<dbReference type="GO" id="GO:0005794">
    <property type="term" value="C:Golgi apparatus"/>
    <property type="evidence" value="ECO:0000250"/>
    <property type="project" value="UniProtKB"/>
</dbReference>
<dbReference type="GO" id="GO:0005770">
    <property type="term" value="C:late endosome"/>
    <property type="evidence" value="ECO:0000250"/>
    <property type="project" value="UniProtKB"/>
</dbReference>
<dbReference type="GO" id="GO:0034362">
    <property type="term" value="C:low-density lipoprotein particle"/>
    <property type="evidence" value="ECO:0007669"/>
    <property type="project" value="UniProtKB-KW"/>
</dbReference>
<dbReference type="GO" id="GO:0005764">
    <property type="term" value="C:lysosome"/>
    <property type="evidence" value="ECO:0000250"/>
    <property type="project" value="UniProtKB"/>
</dbReference>
<dbReference type="GO" id="GO:0005771">
    <property type="term" value="C:multivesicular body"/>
    <property type="evidence" value="ECO:0000314"/>
    <property type="project" value="AgBase"/>
</dbReference>
<dbReference type="GO" id="GO:1990666">
    <property type="term" value="C:PCSK9-LDLR complex"/>
    <property type="evidence" value="ECO:0007669"/>
    <property type="project" value="Ensembl"/>
</dbReference>
<dbReference type="GO" id="GO:0005886">
    <property type="term" value="C:plasma membrane"/>
    <property type="evidence" value="ECO:0000318"/>
    <property type="project" value="GO_Central"/>
</dbReference>
<dbReference type="GO" id="GO:0043235">
    <property type="term" value="C:receptor complex"/>
    <property type="evidence" value="ECO:0007669"/>
    <property type="project" value="Ensembl"/>
</dbReference>
<dbReference type="GO" id="GO:0036477">
    <property type="term" value="C:somatodendritic compartment"/>
    <property type="evidence" value="ECO:0007669"/>
    <property type="project" value="Ensembl"/>
</dbReference>
<dbReference type="GO" id="GO:0097443">
    <property type="term" value="C:sorting endosome"/>
    <property type="evidence" value="ECO:0007669"/>
    <property type="project" value="Ensembl"/>
</dbReference>
<dbReference type="GO" id="GO:0001540">
    <property type="term" value="F:amyloid-beta binding"/>
    <property type="evidence" value="ECO:0007669"/>
    <property type="project" value="Ensembl"/>
</dbReference>
<dbReference type="GO" id="GO:0005509">
    <property type="term" value="F:calcium ion binding"/>
    <property type="evidence" value="ECO:0007669"/>
    <property type="project" value="InterPro"/>
</dbReference>
<dbReference type="GO" id="GO:0042802">
    <property type="term" value="F:identical protein binding"/>
    <property type="evidence" value="ECO:0007669"/>
    <property type="project" value="Ensembl"/>
</dbReference>
<dbReference type="GO" id="GO:0071813">
    <property type="term" value="F:lipoprotein particle binding"/>
    <property type="evidence" value="ECO:0000318"/>
    <property type="project" value="GO_Central"/>
</dbReference>
<dbReference type="GO" id="GO:0030169">
    <property type="term" value="F:low-density lipoprotein particle binding"/>
    <property type="evidence" value="ECO:0007669"/>
    <property type="project" value="Ensembl"/>
</dbReference>
<dbReference type="GO" id="GO:0005041">
    <property type="term" value="F:low-density lipoprotein particle receptor activity"/>
    <property type="evidence" value="ECO:0000318"/>
    <property type="project" value="GO_Central"/>
</dbReference>
<dbReference type="GO" id="GO:0002020">
    <property type="term" value="F:protease binding"/>
    <property type="evidence" value="ECO:0007669"/>
    <property type="project" value="Ensembl"/>
</dbReference>
<dbReference type="GO" id="GO:0030229">
    <property type="term" value="F:very-low-density lipoprotein particle receptor activity"/>
    <property type="evidence" value="ECO:0007669"/>
    <property type="project" value="Ensembl"/>
</dbReference>
<dbReference type="GO" id="GO:0150094">
    <property type="term" value="P:amyloid-beta clearance by cellular catabolic process"/>
    <property type="evidence" value="ECO:0007669"/>
    <property type="project" value="Ensembl"/>
</dbReference>
<dbReference type="GO" id="GO:0048844">
    <property type="term" value="P:artery morphogenesis"/>
    <property type="evidence" value="ECO:0007669"/>
    <property type="project" value="Ensembl"/>
</dbReference>
<dbReference type="GO" id="GO:0071398">
    <property type="term" value="P:cellular response to fatty acid"/>
    <property type="evidence" value="ECO:0007669"/>
    <property type="project" value="Ensembl"/>
</dbReference>
<dbReference type="GO" id="GO:0071404">
    <property type="term" value="P:cellular response to low-density lipoprotein particle stimulus"/>
    <property type="evidence" value="ECO:0007669"/>
    <property type="project" value="Ensembl"/>
</dbReference>
<dbReference type="GO" id="GO:0042632">
    <property type="term" value="P:cholesterol homeostasis"/>
    <property type="evidence" value="ECO:0000318"/>
    <property type="project" value="GO_Central"/>
</dbReference>
<dbReference type="GO" id="GO:0070508">
    <property type="term" value="P:cholesterol import"/>
    <property type="evidence" value="ECO:0007669"/>
    <property type="project" value="Ensembl"/>
</dbReference>
<dbReference type="GO" id="GO:0008203">
    <property type="term" value="P:cholesterol metabolic process"/>
    <property type="evidence" value="ECO:0007669"/>
    <property type="project" value="UniProtKB-KW"/>
</dbReference>
<dbReference type="GO" id="GO:0034384">
    <property type="term" value="P:high-density lipoprotein particle clearance"/>
    <property type="evidence" value="ECO:0007669"/>
    <property type="project" value="Ensembl"/>
</dbReference>
<dbReference type="GO" id="GO:0030299">
    <property type="term" value="P:intestinal cholesterol absorption"/>
    <property type="evidence" value="ECO:0007669"/>
    <property type="project" value="Ensembl"/>
</dbReference>
<dbReference type="GO" id="GO:0042159">
    <property type="term" value="P:lipoprotein catabolic process"/>
    <property type="evidence" value="ECO:0007669"/>
    <property type="project" value="Ensembl"/>
</dbReference>
<dbReference type="GO" id="GO:0007616">
    <property type="term" value="P:long-term memory"/>
    <property type="evidence" value="ECO:0007669"/>
    <property type="project" value="Ensembl"/>
</dbReference>
<dbReference type="GO" id="GO:0034383">
    <property type="term" value="P:low-density lipoprotein particle clearance"/>
    <property type="evidence" value="ECO:0007669"/>
    <property type="project" value="Ensembl"/>
</dbReference>
<dbReference type="GO" id="GO:1905907">
    <property type="term" value="P:negative regulation of amyloid fibril formation"/>
    <property type="evidence" value="ECO:0007669"/>
    <property type="project" value="Ensembl"/>
</dbReference>
<dbReference type="GO" id="GO:0061889">
    <property type="term" value="P:negative regulation of astrocyte activation"/>
    <property type="evidence" value="ECO:0007669"/>
    <property type="project" value="Ensembl"/>
</dbReference>
<dbReference type="GO" id="GO:0010629">
    <property type="term" value="P:negative regulation of gene expression"/>
    <property type="evidence" value="ECO:0007669"/>
    <property type="project" value="Ensembl"/>
</dbReference>
<dbReference type="GO" id="GO:0010989">
    <property type="term" value="P:negative regulation of low-density lipoprotein particle clearance"/>
    <property type="evidence" value="ECO:0007669"/>
    <property type="project" value="Ensembl"/>
</dbReference>
<dbReference type="GO" id="GO:1903979">
    <property type="term" value="P:negative regulation of microglial cell activation"/>
    <property type="evidence" value="ECO:0007669"/>
    <property type="project" value="Ensembl"/>
</dbReference>
<dbReference type="GO" id="GO:0001920">
    <property type="term" value="P:negative regulation of receptor recycling"/>
    <property type="evidence" value="ECO:0007669"/>
    <property type="project" value="Ensembl"/>
</dbReference>
<dbReference type="GO" id="GO:0006909">
    <property type="term" value="P:phagocytosis"/>
    <property type="evidence" value="ECO:0007669"/>
    <property type="project" value="Ensembl"/>
</dbReference>
<dbReference type="GO" id="GO:0015914">
    <property type="term" value="P:phospholipid transport"/>
    <property type="evidence" value="ECO:0007669"/>
    <property type="project" value="Ensembl"/>
</dbReference>
<dbReference type="GO" id="GO:0010628">
    <property type="term" value="P:positive regulation of gene expression"/>
    <property type="evidence" value="ECO:0007669"/>
    <property type="project" value="Ensembl"/>
</dbReference>
<dbReference type="GO" id="GO:0050729">
    <property type="term" value="P:positive regulation of inflammatory response"/>
    <property type="evidence" value="ECO:0007669"/>
    <property type="project" value="Ensembl"/>
</dbReference>
<dbReference type="GO" id="GO:1905167">
    <property type="term" value="P:positive regulation of lysosomal protein catabolic process"/>
    <property type="evidence" value="ECO:0007669"/>
    <property type="project" value="Ensembl"/>
</dbReference>
<dbReference type="GO" id="GO:0010867">
    <property type="term" value="P:positive regulation of triglyceride biosynthetic process"/>
    <property type="evidence" value="ECO:0007669"/>
    <property type="project" value="Ensembl"/>
</dbReference>
<dbReference type="GO" id="GO:0090118">
    <property type="term" value="P:receptor-mediated endocytosis involved in cholesterol transport"/>
    <property type="evidence" value="ECO:0000318"/>
    <property type="project" value="GO_Central"/>
</dbReference>
<dbReference type="GO" id="GO:0090181">
    <property type="term" value="P:regulation of cholesterol metabolic process"/>
    <property type="evidence" value="ECO:0007669"/>
    <property type="project" value="Ensembl"/>
</dbReference>
<dbReference type="GO" id="GO:0010899">
    <property type="term" value="P:regulation of phosphatidylcholine catabolic process"/>
    <property type="evidence" value="ECO:0007669"/>
    <property type="project" value="Ensembl"/>
</dbReference>
<dbReference type="GO" id="GO:0061771">
    <property type="term" value="P:response to caloric restriction"/>
    <property type="evidence" value="ECO:0007669"/>
    <property type="project" value="Ensembl"/>
</dbReference>
<dbReference type="GO" id="GO:0001523">
    <property type="term" value="P:retinoid metabolic process"/>
    <property type="evidence" value="ECO:0007669"/>
    <property type="project" value="Ensembl"/>
</dbReference>
<dbReference type="CDD" id="cd00054">
    <property type="entry name" value="EGF_CA"/>
    <property type="match status" value="1"/>
</dbReference>
<dbReference type="CDD" id="cd00112">
    <property type="entry name" value="LDLa"/>
    <property type="match status" value="6"/>
</dbReference>
<dbReference type="FunFam" id="4.10.400.10:FF:000072">
    <property type="entry name" value="Low density lipoprotein receptor"/>
    <property type="match status" value="1"/>
</dbReference>
<dbReference type="FunFam" id="4.10.400.10:FF:000084">
    <property type="entry name" value="Low density lipoprotein receptor"/>
    <property type="match status" value="1"/>
</dbReference>
<dbReference type="FunFam" id="4.10.400.10:FF:000111">
    <property type="entry name" value="Low density lipoprotein receptor"/>
    <property type="match status" value="1"/>
</dbReference>
<dbReference type="FunFam" id="4.10.400.10:FF:000124">
    <property type="entry name" value="Low density lipoprotein receptor"/>
    <property type="match status" value="1"/>
</dbReference>
<dbReference type="FunFam" id="4.10.400.10:FF:000116">
    <property type="entry name" value="Low-density lipoprotein receptor"/>
    <property type="match status" value="1"/>
</dbReference>
<dbReference type="FunFam" id="2.10.25.10:FF:000009">
    <property type="entry name" value="Low-density lipoprotein receptor isoform 1"/>
    <property type="match status" value="1"/>
</dbReference>
<dbReference type="FunFam" id="2.10.25.10:FF:000052">
    <property type="entry name" value="low-density lipoprotein receptor isoform X1"/>
    <property type="match status" value="1"/>
</dbReference>
<dbReference type="FunFam" id="2.120.10.30:FF:000002">
    <property type="entry name" value="low-density lipoprotein receptor isoform X1"/>
    <property type="match status" value="1"/>
</dbReference>
<dbReference type="FunFam" id="4.10.400.10:FF:000113">
    <property type="entry name" value="Low-density lipoprotein receptor-related protein 8"/>
    <property type="match status" value="1"/>
</dbReference>
<dbReference type="FunFam" id="4.10.400.10:FF:000006">
    <property type="entry name" value="Putative low-density lipoprotein receptor"/>
    <property type="match status" value="1"/>
</dbReference>
<dbReference type="Gene3D" id="4.10.1220.10">
    <property type="entry name" value="EGF-type module"/>
    <property type="match status" value="1"/>
</dbReference>
<dbReference type="Gene3D" id="2.10.25.10">
    <property type="entry name" value="Laminin"/>
    <property type="match status" value="3"/>
</dbReference>
<dbReference type="Gene3D" id="4.10.400.10">
    <property type="entry name" value="Low-density Lipoprotein Receptor"/>
    <property type="match status" value="6"/>
</dbReference>
<dbReference type="Gene3D" id="2.120.10.30">
    <property type="entry name" value="TolB, C-terminal domain"/>
    <property type="match status" value="1"/>
</dbReference>
<dbReference type="InterPro" id="IPR011042">
    <property type="entry name" value="6-blade_b-propeller_TolB-like"/>
</dbReference>
<dbReference type="InterPro" id="IPR001881">
    <property type="entry name" value="EGF-like_Ca-bd_dom"/>
</dbReference>
<dbReference type="InterPro" id="IPR000742">
    <property type="entry name" value="EGF-like_dom"/>
</dbReference>
<dbReference type="InterPro" id="IPR000152">
    <property type="entry name" value="EGF-type_Asp/Asn_hydroxyl_site"/>
</dbReference>
<dbReference type="InterPro" id="IPR018097">
    <property type="entry name" value="EGF_Ca-bd_CS"/>
</dbReference>
<dbReference type="InterPro" id="IPR009030">
    <property type="entry name" value="Growth_fac_rcpt_cys_sf"/>
</dbReference>
<dbReference type="InterPro" id="IPR036055">
    <property type="entry name" value="LDL_receptor-like_sf"/>
</dbReference>
<dbReference type="InterPro" id="IPR051221">
    <property type="entry name" value="LDLR-related"/>
</dbReference>
<dbReference type="InterPro" id="IPR023415">
    <property type="entry name" value="LDLR_class-A_CS"/>
</dbReference>
<dbReference type="InterPro" id="IPR000033">
    <property type="entry name" value="LDLR_classB_rpt"/>
</dbReference>
<dbReference type="InterPro" id="IPR002172">
    <property type="entry name" value="LDrepeatLR_classA_rpt"/>
</dbReference>
<dbReference type="InterPro" id="IPR049883">
    <property type="entry name" value="NOTCH1_EGF-like"/>
</dbReference>
<dbReference type="PANTHER" id="PTHR22722:SF15">
    <property type="entry name" value="LOW-DENSITY LIPOPROTEIN RECEPTOR-RELATED"/>
    <property type="match status" value="1"/>
</dbReference>
<dbReference type="PANTHER" id="PTHR22722">
    <property type="entry name" value="LOW-DENSITY LIPOPROTEIN RECEPTOR-RELATED PROTEIN 2-RELATED"/>
    <property type="match status" value="1"/>
</dbReference>
<dbReference type="Pfam" id="PF07645">
    <property type="entry name" value="EGF_CA"/>
    <property type="match status" value="1"/>
</dbReference>
<dbReference type="Pfam" id="PF14670">
    <property type="entry name" value="FXa_inhibition"/>
    <property type="match status" value="1"/>
</dbReference>
<dbReference type="Pfam" id="PF00057">
    <property type="entry name" value="Ldl_recept_a"/>
    <property type="match status" value="7"/>
</dbReference>
<dbReference type="Pfam" id="PF00058">
    <property type="entry name" value="Ldl_recept_b"/>
    <property type="match status" value="5"/>
</dbReference>
<dbReference type="PRINTS" id="PR00261">
    <property type="entry name" value="LDLRECEPTOR"/>
</dbReference>
<dbReference type="SMART" id="SM00181">
    <property type="entry name" value="EGF"/>
    <property type="match status" value="4"/>
</dbReference>
<dbReference type="SMART" id="SM00179">
    <property type="entry name" value="EGF_CA"/>
    <property type="match status" value="2"/>
</dbReference>
<dbReference type="SMART" id="SM00192">
    <property type="entry name" value="LDLa"/>
    <property type="match status" value="7"/>
</dbReference>
<dbReference type="SMART" id="SM00135">
    <property type="entry name" value="LY"/>
    <property type="match status" value="5"/>
</dbReference>
<dbReference type="SUPFAM" id="SSF57184">
    <property type="entry name" value="Growth factor receptor domain"/>
    <property type="match status" value="1"/>
</dbReference>
<dbReference type="SUPFAM" id="SSF57424">
    <property type="entry name" value="LDL receptor-like module"/>
    <property type="match status" value="6"/>
</dbReference>
<dbReference type="SUPFAM" id="SSF63825">
    <property type="entry name" value="YWTD domain"/>
    <property type="match status" value="1"/>
</dbReference>
<dbReference type="PROSITE" id="PS00010">
    <property type="entry name" value="ASX_HYDROXYL"/>
    <property type="match status" value="2"/>
</dbReference>
<dbReference type="PROSITE" id="PS01186">
    <property type="entry name" value="EGF_2"/>
    <property type="match status" value="2"/>
</dbReference>
<dbReference type="PROSITE" id="PS50026">
    <property type="entry name" value="EGF_3"/>
    <property type="match status" value="2"/>
</dbReference>
<dbReference type="PROSITE" id="PS01187">
    <property type="entry name" value="EGF_CA"/>
    <property type="match status" value="1"/>
</dbReference>
<dbReference type="PROSITE" id="PS01209">
    <property type="entry name" value="LDLRA_1"/>
    <property type="match status" value="7"/>
</dbReference>
<dbReference type="PROSITE" id="PS50068">
    <property type="entry name" value="LDLRA_2"/>
    <property type="match status" value="7"/>
</dbReference>
<dbReference type="PROSITE" id="PS51120">
    <property type="entry name" value="LDLRB"/>
    <property type="match status" value="5"/>
</dbReference>
<comment type="function">
    <text evidence="1">Binds low density lipoprotein /LDL, the major cholesterol-carrying lipoprotein of plasma, and transports it into cells by endocytosis. In order to be internalized, the receptor-ligand complexes must first cluster into clathrin-coated pits. Forms a ternary complex with PGRMC1 and TMEM97 receptors which increases LDLR-mediated LDL internalization.</text>
</comment>
<comment type="subunit">
    <text evidence="1 2">Interacts (via NPXY motif) with DAB2 (via PID domain); the interaction is impaired by tyrosine phosphorylation of the NPXY motif (By similarity). Interacts (via NPXY motif) with LDLRAP1 (via PID domain). Interacts with ARRB1. Interacts with SNX17. Interacts with the full-length immature form of PCSK9 (via C-terminus) (By similarity). Interacts with PGRMC1 and TMEM97; the interaction increases LDL internalization (By similarity).</text>
</comment>
<comment type="subcellular location">
    <subcellularLocation>
        <location evidence="8">Cell membrane</location>
        <topology evidence="8">Single-pass type I membrane protein</topology>
    </subcellularLocation>
    <subcellularLocation>
        <location evidence="1">Membrane</location>
        <location evidence="1">Clathrin-coated pit</location>
    </subcellularLocation>
    <subcellularLocation>
        <location evidence="1">Golgi apparatus</location>
    </subcellularLocation>
    <subcellularLocation>
        <location evidence="1">Early endosome</location>
    </subcellularLocation>
    <subcellularLocation>
        <location evidence="1">Late endosome</location>
    </subcellularLocation>
    <subcellularLocation>
        <location evidence="1">Lysosome</location>
    </subcellularLocation>
    <text evidence="1">Rapidly endocytosed upon ligand binding.</text>
</comment>
<comment type="domain">
    <text evidence="1">The NPXY motif mediates the interaction with the clathrin adapter DAB2 and with LDLRAP1 which are involved in receptor internalization. A few residues outside the motif also play a role in the interaction.</text>
</comment>
<comment type="PTM">
    <text evidence="1">N- and O-glycosylated.</text>
</comment>
<comment type="PTM">
    <text evidence="1">Ubiquitinated by MYLIP leading to degradation.</text>
</comment>
<comment type="similarity">
    <text evidence="9">Belongs to the LDLR family.</text>
</comment>
<feature type="signal peptide" evidence="8">
    <location>
        <begin position="1"/>
        <end position="21"/>
    </location>
</feature>
<feature type="chain" id="PRO_0000191075" description="Low-density lipoprotein receptor">
    <location>
        <begin position="22"/>
        <end position="845"/>
    </location>
</feature>
<feature type="topological domain" description="Extracellular" evidence="8">
    <location>
        <begin position="22"/>
        <end position="774"/>
    </location>
</feature>
<feature type="transmembrane region" description="Helical" evidence="3">
    <location>
        <begin position="775"/>
        <end position="795"/>
    </location>
</feature>
<feature type="topological domain" description="Cytoplasmic" evidence="1">
    <location>
        <begin position="796"/>
        <end position="845"/>
    </location>
</feature>
<feature type="domain" description="LDL-receptor class A 1" evidence="5">
    <location>
        <begin position="26"/>
        <end position="64"/>
    </location>
</feature>
<feature type="domain" description="LDL-receptor class A 2" evidence="5">
    <location>
        <begin position="67"/>
        <end position="105"/>
    </location>
</feature>
<feature type="domain" description="LDL-receptor class A 3" evidence="5">
    <location>
        <begin position="108"/>
        <end position="144"/>
    </location>
</feature>
<feature type="domain" description="LDL-receptor class A 4" evidence="5">
    <location>
        <begin position="147"/>
        <end position="185"/>
    </location>
</feature>
<feature type="domain" description="LDL-receptor class A 5" evidence="5">
    <location>
        <begin position="198"/>
        <end position="234"/>
    </location>
</feature>
<feature type="domain" description="LDL-receptor class A 6" evidence="5">
    <location>
        <begin position="237"/>
        <end position="273"/>
    </location>
</feature>
<feature type="domain" description="LDL-receptor class A 7" evidence="5">
    <location>
        <begin position="277"/>
        <end position="316"/>
    </location>
</feature>
<feature type="domain" description="EGF-like 1" evidence="4">
    <location>
        <begin position="316"/>
        <end position="355"/>
    </location>
</feature>
<feature type="domain" description="EGF-like 2; calcium-binding" evidence="4">
    <location>
        <begin position="356"/>
        <end position="388"/>
    </location>
</feature>
<feature type="repeat" description="LDL-receptor class B 1" evidence="6">
    <location>
        <begin position="441"/>
        <end position="487"/>
    </location>
</feature>
<feature type="repeat" description="LDL-receptor class B 2" evidence="6">
    <location>
        <begin position="488"/>
        <end position="530"/>
    </location>
</feature>
<feature type="repeat" description="LDL-receptor class B 3" evidence="6">
    <location>
        <begin position="531"/>
        <end position="574"/>
    </location>
</feature>
<feature type="repeat" description="LDL-receptor class B 4" evidence="6">
    <location>
        <begin position="575"/>
        <end position="619"/>
    </location>
</feature>
<feature type="repeat" description="LDL-receptor class B 5" evidence="6">
    <location>
        <begin position="620"/>
        <end position="660"/>
    </location>
</feature>
<feature type="region of interest" description="Clustered O-linked oligosaccharides" evidence="3">
    <location>
        <begin position="712"/>
        <end position="753"/>
    </location>
</feature>
<feature type="region of interest" description="Disordered" evidence="7">
    <location>
        <begin position="717"/>
        <end position="765"/>
    </location>
</feature>
<feature type="region of interest" description="Required for MYLIP-triggered down-regulation of LDLR" evidence="1">
    <location>
        <begin position="796"/>
        <end position="845"/>
    </location>
</feature>
<feature type="short sequence motif" description="NPXY motif" evidence="1">
    <location>
        <begin position="808"/>
        <end position="813"/>
    </location>
</feature>
<feature type="compositionally biased region" description="Polar residues" evidence="7">
    <location>
        <begin position="717"/>
        <end position="733"/>
    </location>
</feature>
<feature type="compositionally biased region" description="Polar residues" evidence="7">
    <location>
        <begin position="742"/>
        <end position="757"/>
    </location>
</feature>
<feature type="glycosylation site" description="N-linked (GlcNAc...) asparagine" evidence="3">
    <location>
        <position position="659"/>
    </location>
</feature>
<feature type="disulfide bond" evidence="5">
    <location>
        <begin position="27"/>
        <end position="39"/>
    </location>
</feature>
<feature type="disulfide bond" evidence="5">
    <location>
        <begin position="34"/>
        <end position="52"/>
    </location>
</feature>
<feature type="disulfide bond" evidence="5">
    <location>
        <begin position="46"/>
        <end position="63"/>
    </location>
</feature>
<feature type="disulfide bond" evidence="5">
    <location>
        <begin position="68"/>
        <end position="82"/>
    </location>
</feature>
<feature type="disulfide bond" evidence="5">
    <location>
        <begin position="75"/>
        <end position="95"/>
    </location>
</feature>
<feature type="disulfide bond" evidence="5">
    <location>
        <begin position="89"/>
        <end position="104"/>
    </location>
</feature>
<feature type="disulfide bond" evidence="5">
    <location>
        <begin position="109"/>
        <end position="121"/>
    </location>
</feature>
<feature type="disulfide bond" evidence="5">
    <location>
        <begin position="116"/>
        <end position="134"/>
    </location>
</feature>
<feature type="disulfide bond" evidence="5">
    <location>
        <begin position="128"/>
        <end position="143"/>
    </location>
</feature>
<feature type="disulfide bond" evidence="5">
    <location>
        <begin position="148"/>
        <end position="160"/>
    </location>
</feature>
<feature type="disulfide bond" evidence="5">
    <location>
        <begin position="155"/>
        <end position="173"/>
    </location>
</feature>
<feature type="disulfide bond" evidence="5">
    <location>
        <begin position="167"/>
        <end position="184"/>
    </location>
</feature>
<feature type="disulfide bond" evidence="5">
    <location>
        <begin position="199"/>
        <end position="211"/>
    </location>
</feature>
<feature type="disulfide bond" evidence="5">
    <location>
        <begin position="206"/>
        <end position="224"/>
    </location>
</feature>
<feature type="disulfide bond" evidence="5">
    <location>
        <begin position="218"/>
        <end position="233"/>
    </location>
</feature>
<feature type="disulfide bond" evidence="5">
    <location>
        <begin position="238"/>
        <end position="250"/>
    </location>
</feature>
<feature type="disulfide bond" evidence="5">
    <location>
        <begin position="245"/>
        <end position="263"/>
    </location>
</feature>
<feature type="disulfide bond" evidence="5">
    <location>
        <begin position="257"/>
        <end position="272"/>
    </location>
</feature>
<feature type="disulfide bond" evidence="5">
    <location>
        <begin position="278"/>
        <end position="291"/>
    </location>
</feature>
<feature type="disulfide bond" evidence="5">
    <location>
        <begin position="286"/>
        <end position="304"/>
    </location>
</feature>
<feature type="disulfide bond" evidence="5">
    <location>
        <begin position="298"/>
        <end position="315"/>
    </location>
</feature>
<feature type="disulfide bond" evidence="4">
    <location>
        <begin position="320"/>
        <end position="331"/>
    </location>
</feature>
<feature type="disulfide bond" evidence="4">
    <location>
        <begin position="327"/>
        <end position="340"/>
    </location>
</feature>
<feature type="disulfide bond" evidence="4">
    <location>
        <begin position="342"/>
        <end position="354"/>
    </location>
</feature>
<feature type="disulfide bond" evidence="4">
    <location>
        <begin position="360"/>
        <end position="370"/>
    </location>
</feature>
<feature type="disulfide bond" evidence="4">
    <location>
        <begin position="366"/>
        <end position="379"/>
    </location>
</feature>
<feature type="sequence conflict" description="In Ref. 3; AAA30618." evidence="9" ref="3">
    <original>I</original>
    <variation>V</variation>
    <location>
        <position position="760"/>
    </location>
</feature>
<sequence length="845" mass="92869">MRLAGWGLRWAIALLIAVGEAAVEDNCGRNEFQCQDGKCISYKWVCDGTAECQDGSDESQETCKSVTCKMGDFSCGGRVNRCISGSWRCDGQVDCENGSDEEGCSPKTCSQDEFRCNDGKCIAPKFVCDLDLDCLDGSDEASCPMPTCGPANFQCNSSMCIPQLWACDGDPDCDDGSDEWPKHCGTPHPSGPLQDNNPCSALEFHCGSGECIHSSWHCDHDPDCKDKSDEENCAVATCRPDEFQCSDGTCIHGSRQCDREPDCKDLSDELGCVNVTLCEGPNKFKCQSGECISLDKVCNSVRDCRDWSDEPLKDCGTNECLDNKGGCSHICNDLKIGYECLCPEGFQLVGKHRCEDIDECQNPDTCSQLCVNLEGSYKCECEEGFRLEPLTKACKAVGTIAYLFFTNRHEVRKMTLDRSEYTSLIPNLKNVVALDTEVASNRIYWSDLSQRKIYSAQIDGAPGFSSYDTVIGEDLQAPDGLAVDWIHSNIYWTDSILGTVSVADTKGVKRKTLFQEEGSKPRAIVVDPVHGFMYWTDWGAPAEIKKGGLNGVDVYSLVTEDIQWPNGITLDLSGGRLYWVDSKLHSISSIDVNGGNRKTVLEDKKKLAHPFSLAIFEDKVFWTDVINEAIFSANRLTGSDISLMAENLLSPEDIVLFHNLTQPRGVNWCERTALRNGGCQYLCLPAPQINPRSPKFTCACPDGMLLAKDMRSCLTESESAVTTRGPSTVSSTAVGPKRTASPELTTAESVTMSQQGQGDIASQADTERPGSVGALYIVLPIALLILLAFGTFLLWKNWRLKSINSINFDNPVYQKTTEDEVHICRSQDGYTYPSRQMVSLEDDVA</sequence>
<evidence type="ECO:0000250" key="1">
    <source>
        <dbReference type="UniProtKB" id="P01130"/>
    </source>
</evidence>
<evidence type="ECO:0000250" key="2">
    <source>
        <dbReference type="UniProtKB" id="P35951"/>
    </source>
</evidence>
<evidence type="ECO:0000255" key="3"/>
<evidence type="ECO:0000255" key="4">
    <source>
        <dbReference type="PROSITE-ProRule" id="PRU00076"/>
    </source>
</evidence>
<evidence type="ECO:0000255" key="5">
    <source>
        <dbReference type="PROSITE-ProRule" id="PRU00124"/>
    </source>
</evidence>
<evidence type="ECO:0000255" key="6">
    <source>
        <dbReference type="PROSITE-ProRule" id="PRU00461"/>
    </source>
</evidence>
<evidence type="ECO:0000256" key="7">
    <source>
        <dbReference type="SAM" id="MobiDB-lite"/>
    </source>
</evidence>
<evidence type="ECO:0000269" key="8">
    <source>
    </source>
</evidence>
<evidence type="ECO:0000305" key="9"/>